<evidence type="ECO:0000255" key="1"/>
<evidence type="ECO:0000269" key="2">
    <source>
    </source>
</evidence>
<evidence type="ECO:0000269" key="3">
    <source>
    </source>
</evidence>
<evidence type="ECO:0000303" key="4">
    <source>
    </source>
</evidence>
<evidence type="ECO:0000303" key="5">
    <source>
    </source>
</evidence>
<evidence type="ECO:0000305" key="6"/>
<evidence type="ECO:0007829" key="7">
    <source>
        <dbReference type="PDB" id="5OL8"/>
    </source>
</evidence>
<evidence type="ECO:0007829" key="8">
    <source>
        <dbReference type="PDB" id="5OL9"/>
    </source>
</evidence>
<evidence type="ECO:0007829" key="9">
    <source>
        <dbReference type="PDB" id="9BDC"/>
    </source>
</evidence>
<feature type="transit peptide" description="Mitochondrion" evidence="1">
    <location>
        <begin position="1"/>
        <end position="35"/>
    </location>
</feature>
<feature type="chain" id="PRO_0000406329" description="Transcription elongation factor, mitochondrial">
    <location>
        <begin position="36"/>
        <end position="360"/>
    </location>
</feature>
<feature type="splice variant" id="VSP_040808" description="In isoform 2." evidence="4 5">
    <original>AVNSII</original>
    <variation>NCLGSP</variation>
    <location>
        <begin position="166"/>
        <end position="171"/>
    </location>
</feature>
<feature type="splice variant" id="VSP_040809" description="In isoform 2." evidence="4 5">
    <location>
        <begin position="172"/>
        <end position="360"/>
    </location>
</feature>
<feature type="sequence variant" id="VAR_088801" description="In COXPD58; uncertain significance; dbSNP:rs201502850." evidence="3">
    <original>R</original>
    <variation>W</variation>
    <location>
        <position position="34"/>
    </location>
</feature>
<feature type="sequence variant" id="VAR_088802" description="In COXPD58; likely pathogenic; decreased DNA polymerase processivity factor activity; dbSNP:rs763654354." evidence="3">
    <original>P</original>
    <variation>A</variation>
    <location>
        <position position="157"/>
    </location>
</feature>
<feature type="sequence variant" id="VAR_088803" description="In COXPD58; likely pathogenic; decreased DNA polymerase processivity factor activity." evidence="3">
    <original>I</original>
    <variation>K</variation>
    <location>
        <position position="159"/>
    </location>
</feature>
<feature type="sequence variant" id="VAR_088804" description="In COXPD58; likely pathogenic; decreased DNA polymerase processivity factor activity." evidence="3">
    <location>
        <begin position="162"/>
        <end position="163"/>
    </location>
</feature>
<feature type="sequence variant" id="VAR_088805" description="In COXPD58; uncertain significance; decreased DNA polymerase processivity factor activity; dbSNP:rs200291958." evidence="3">
    <original>K</original>
    <variation>R</variation>
    <location>
        <position position="188"/>
    </location>
</feature>
<feature type="sequence variant" id="VAR_045689" description="In dbSNP:rs2433.">
    <original>I</original>
    <variation>V</variation>
    <location>
        <position position="348"/>
    </location>
</feature>
<feature type="sequence conflict" description="In Ref. 4; AAH09025/AAH73169." evidence="6" ref="4">
    <original>E</original>
    <variation>K</variation>
    <location>
        <position position="232"/>
    </location>
</feature>
<feature type="helix" evidence="8">
    <location>
        <begin position="61"/>
        <end position="64"/>
    </location>
</feature>
<feature type="helix" evidence="8">
    <location>
        <begin position="67"/>
        <end position="79"/>
    </location>
</feature>
<feature type="helix" evidence="8">
    <location>
        <begin position="82"/>
        <end position="85"/>
    </location>
</feature>
<feature type="helix" evidence="8">
    <location>
        <begin position="89"/>
        <end position="91"/>
    </location>
</feature>
<feature type="helix" evidence="8">
    <location>
        <begin position="94"/>
        <end position="106"/>
    </location>
</feature>
<feature type="strand" evidence="8">
    <location>
        <begin position="110"/>
        <end position="112"/>
    </location>
</feature>
<feature type="helix" evidence="8">
    <location>
        <begin position="113"/>
        <end position="117"/>
    </location>
</feature>
<feature type="helix" evidence="8">
    <location>
        <begin position="123"/>
        <end position="134"/>
    </location>
</feature>
<feature type="helix" evidence="9">
    <location>
        <begin position="150"/>
        <end position="154"/>
    </location>
</feature>
<feature type="strand" evidence="7">
    <location>
        <begin position="155"/>
        <end position="157"/>
    </location>
</feature>
<feature type="helix" evidence="7">
    <location>
        <begin position="161"/>
        <end position="165"/>
    </location>
</feature>
<feature type="strand" evidence="7">
    <location>
        <begin position="169"/>
        <end position="175"/>
    </location>
</feature>
<feature type="strand" evidence="7">
    <location>
        <begin position="177"/>
        <end position="186"/>
    </location>
</feature>
<feature type="strand" evidence="7">
    <location>
        <begin position="190"/>
        <end position="198"/>
    </location>
</feature>
<feature type="strand" evidence="7">
    <location>
        <begin position="202"/>
        <end position="205"/>
    </location>
</feature>
<feature type="helix" evidence="7">
    <location>
        <begin position="209"/>
        <end position="220"/>
    </location>
</feature>
<feature type="strand" evidence="7">
    <location>
        <begin position="227"/>
        <end position="233"/>
    </location>
</feature>
<feature type="helix" evidence="7">
    <location>
        <begin position="244"/>
        <end position="261"/>
    </location>
</feature>
<feature type="helix" evidence="7">
    <location>
        <begin position="265"/>
        <end position="268"/>
    </location>
</feature>
<feature type="strand" evidence="7">
    <location>
        <begin position="273"/>
        <end position="277"/>
    </location>
</feature>
<feature type="helix" evidence="7">
    <location>
        <begin position="278"/>
        <end position="284"/>
    </location>
</feature>
<feature type="strand" evidence="9">
    <location>
        <begin position="292"/>
        <end position="294"/>
    </location>
</feature>
<feature type="helix" evidence="7">
    <location>
        <begin position="297"/>
        <end position="305"/>
    </location>
</feature>
<feature type="strand" evidence="7">
    <location>
        <begin position="314"/>
        <end position="316"/>
    </location>
</feature>
<feature type="helix" evidence="7">
    <location>
        <begin position="319"/>
        <end position="331"/>
    </location>
</feature>
<feature type="turn" evidence="7">
    <location>
        <begin position="332"/>
        <end position="336"/>
    </location>
</feature>
<feature type="helix" evidence="7">
    <location>
        <begin position="338"/>
        <end position="354"/>
    </location>
</feature>
<reference key="1">
    <citation type="journal article" date="2001" name="Am. J. Hum. Genet.">
        <title>Molecular characterization and gene content of breakpoint boundaries in patients with neurofibromatosis type 1 with 17q11.2 microdeletions.</title>
        <authorList>
            <person name="Jenne D.E."/>
            <person name="Tinschert S."/>
            <person name="Reimann H."/>
            <person name="Lasinger W."/>
            <person name="Thiel G."/>
            <person name="Hameister H."/>
            <person name="Kehrer-Sawatzki H."/>
        </authorList>
    </citation>
    <scope>NUCLEOTIDE SEQUENCE [MRNA] (ISOFORM 1)</scope>
</reference>
<reference key="2">
    <citation type="journal article" date="2004" name="Nat. Genet.">
        <title>Complete sequencing and characterization of 21,243 full-length human cDNAs.</title>
        <authorList>
            <person name="Ota T."/>
            <person name="Suzuki Y."/>
            <person name="Nishikawa T."/>
            <person name="Otsuki T."/>
            <person name="Sugiyama T."/>
            <person name="Irie R."/>
            <person name="Wakamatsu A."/>
            <person name="Hayashi K."/>
            <person name="Sato H."/>
            <person name="Nagai K."/>
            <person name="Kimura K."/>
            <person name="Makita H."/>
            <person name="Sekine M."/>
            <person name="Obayashi M."/>
            <person name="Nishi T."/>
            <person name="Shibahara T."/>
            <person name="Tanaka T."/>
            <person name="Ishii S."/>
            <person name="Yamamoto J."/>
            <person name="Saito K."/>
            <person name="Kawai Y."/>
            <person name="Isono Y."/>
            <person name="Nakamura Y."/>
            <person name="Nagahari K."/>
            <person name="Murakami K."/>
            <person name="Yasuda T."/>
            <person name="Iwayanagi T."/>
            <person name="Wagatsuma M."/>
            <person name="Shiratori A."/>
            <person name="Sudo H."/>
            <person name="Hosoiri T."/>
            <person name="Kaku Y."/>
            <person name="Kodaira H."/>
            <person name="Kondo H."/>
            <person name="Sugawara M."/>
            <person name="Takahashi M."/>
            <person name="Kanda K."/>
            <person name="Yokoi T."/>
            <person name="Furuya T."/>
            <person name="Kikkawa E."/>
            <person name="Omura Y."/>
            <person name="Abe K."/>
            <person name="Kamihara K."/>
            <person name="Katsuta N."/>
            <person name="Sato K."/>
            <person name="Tanikawa M."/>
            <person name="Yamazaki M."/>
            <person name="Ninomiya K."/>
            <person name="Ishibashi T."/>
            <person name="Yamashita H."/>
            <person name="Murakawa K."/>
            <person name="Fujimori K."/>
            <person name="Tanai H."/>
            <person name="Kimata M."/>
            <person name="Watanabe M."/>
            <person name="Hiraoka S."/>
            <person name="Chiba Y."/>
            <person name="Ishida S."/>
            <person name="Ono Y."/>
            <person name="Takiguchi S."/>
            <person name="Watanabe S."/>
            <person name="Yosida M."/>
            <person name="Hotuta T."/>
            <person name="Kusano J."/>
            <person name="Kanehori K."/>
            <person name="Takahashi-Fujii A."/>
            <person name="Hara H."/>
            <person name="Tanase T.-O."/>
            <person name="Nomura Y."/>
            <person name="Togiya S."/>
            <person name="Komai F."/>
            <person name="Hara R."/>
            <person name="Takeuchi K."/>
            <person name="Arita M."/>
            <person name="Imose N."/>
            <person name="Musashino K."/>
            <person name="Yuuki H."/>
            <person name="Oshima A."/>
            <person name="Sasaki N."/>
            <person name="Aotsuka S."/>
            <person name="Yoshikawa Y."/>
            <person name="Matsunawa H."/>
            <person name="Ichihara T."/>
            <person name="Shiohata N."/>
            <person name="Sano S."/>
            <person name="Moriya S."/>
            <person name="Momiyama H."/>
            <person name="Satoh N."/>
            <person name="Takami S."/>
            <person name="Terashima Y."/>
            <person name="Suzuki O."/>
            <person name="Nakagawa S."/>
            <person name="Senoh A."/>
            <person name="Mizoguchi H."/>
            <person name="Goto Y."/>
            <person name="Shimizu F."/>
            <person name="Wakebe H."/>
            <person name="Hishigaki H."/>
            <person name="Watanabe T."/>
            <person name="Sugiyama A."/>
            <person name="Takemoto M."/>
            <person name="Kawakami B."/>
            <person name="Yamazaki M."/>
            <person name="Watanabe K."/>
            <person name="Kumagai A."/>
            <person name="Itakura S."/>
            <person name="Fukuzumi Y."/>
            <person name="Fujimori Y."/>
            <person name="Komiyama M."/>
            <person name="Tashiro H."/>
            <person name="Tanigami A."/>
            <person name="Fujiwara T."/>
            <person name="Ono T."/>
            <person name="Yamada K."/>
            <person name="Fujii Y."/>
            <person name="Ozaki K."/>
            <person name="Hirao M."/>
            <person name="Ohmori Y."/>
            <person name="Kawabata A."/>
            <person name="Hikiji T."/>
            <person name="Kobatake N."/>
            <person name="Inagaki H."/>
            <person name="Ikema Y."/>
            <person name="Okamoto S."/>
            <person name="Okitani R."/>
            <person name="Kawakami T."/>
            <person name="Noguchi S."/>
            <person name="Itoh T."/>
            <person name="Shigeta K."/>
            <person name="Senba T."/>
            <person name="Matsumura K."/>
            <person name="Nakajima Y."/>
            <person name="Mizuno T."/>
            <person name="Morinaga M."/>
            <person name="Sasaki M."/>
            <person name="Togashi T."/>
            <person name="Oyama M."/>
            <person name="Hata H."/>
            <person name="Watanabe M."/>
            <person name="Komatsu T."/>
            <person name="Mizushima-Sugano J."/>
            <person name="Satoh T."/>
            <person name="Shirai Y."/>
            <person name="Takahashi Y."/>
            <person name="Nakagawa K."/>
            <person name="Okumura K."/>
            <person name="Nagase T."/>
            <person name="Nomura N."/>
            <person name="Kikuchi H."/>
            <person name="Masuho Y."/>
            <person name="Yamashita R."/>
            <person name="Nakai K."/>
            <person name="Yada T."/>
            <person name="Nakamura Y."/>
            <person name="Ohara O."/>
            <person name="Isogai T."/>
            <person name="Sugano S."/>
        </authorList>
    </citation>
    <scope>NUCLEOTIDE SEQUENCE [LARGE SCALE MRNA] (ISOFORM 2)</scope>
    <source>
        <tissue>Small intestine</tissue>
    </source>
</reference>
<reference key="3">
    <citation type="submission" date="2005-09" db="EMBL/GenBank/DDBJ databases">
        <authorList>
            <person name="Mural R.J."/>
            <person name="Istrail S."/>
            <person name="Sutton G.G."/>
            <person name="Florea L."/>
            <person name="Halpern A.L."/>
            <person name="Mobarry C.M."/>
            <person name="Lippert R."/>
            <person name="Walenz B."/>
            <person name="Shatkay H."/>
            <person name="Dew I."/>
            <person name="Miller J.R."/>
            <person name="Flanigan M.J."/>
            <person name="Edwards N.J."/>
            <person name="Bolanos R."/>
            <person name="Fasulo D."/>
            <person name="Halldorsson B.V."/>
            <person name="Hannenhalli S."/>
            <person name="Turner R."/>
            <person name="Yooseph S."/>
            <person name="Lu F."/>
            <person name="Nusskern D.R."/>
            <person name="Shue B.C."/>
            <person name="Zheng X.H."/>
            <person name="Zhong F."/>
            <person name="Delcher A.L."/>
            <person name="Huson D.H."/>
            <person name="Kravitz S.A."/>
            <person name="Mouchard L."/>
            <person name="Reinert K."/>
            <person name="Remington K.A."/>
            <person name="Clark A.G."/>
            <person name="Waterman M.S."/>
            <person name="Eichler E.E."/>
            <person name="Adams M.D."/>
            <person name="Hunkapiller M.W."/>
            <person name="Myers E.W."/>
            <person name="Venter J.C."/>
        </authorList>
    </citation>
    <scope>NUCLEOTIDE SEQUENCE [LARGE SCALE GENOMIC DNA]</scope>
</reference>
<reference key="4">
    <citation type="journal article" date="2004" name="Genome Res.">
        <title>The status, quality, and expansion of the NIH full-length cDNA project: the Mammalian Gene Collection (MGC).</title>
        <authorList>
            <consortium name="The MGC Project Team"/>
        </authorList>
    </citation>
    <scope>NUCLEOTIDE SEQUENCE [LARGE SCALE MRNA] OF 11-360 (ISOFORM 1)</scope>
    <scope>NUCLEOTIDE SEQUENCE [LARGE SCALE MRNA] OF 90-360 (ISOFORM 2)</scope>
    <source>
        <tissue>Brain</tissue>
        <tissue>PNS</tissue>
    </source>
</reference>
<reference key="5">
    <citation type="submission" date="2004-06" db="EMBL/GenBank/DDBJ databases">
        <title>Cloning of human full open reading frames in Gateway(TM) system entry vector (pDONR201).</title>
        <authorList>
            <person name="Ebert L."/>
            <person name="Schick M."/>
            <person name="Neubert P."/>
            <person name="Schatten R."/>
            <person name="Henze S."/>
            <person name="Korn B."/>
        </authorList>
    </citation>
    <scope>NUCLEOTIDE SEQUENCE [LARGE SCALE MRNA] OF 203-360 (ISOFORM 1)</scope>
</reference>
<reference key="6">
    <citation type="journal article" date="2011" name="BMC Syst. Biol.">
        <title>Initial characterization of the human central proteome.</title>
        <authorList>
            <person name="Burkard T.R."/>
            <person name="Planyavsky M."/>
            <person name="Kaupe I."/>
            <person name="Breitwieser F.P."/>
            <person name="Buerckstuemmer T."/>
            <person name="Bennett K.L."/>
            <person name="Superti-Furga G."/>
            <person name="Colinge J."/>
        </authorList>
    </citation>
    <scope>IDENTIFICATION BY MASS SPECTROMETRY [LARGE SCALE ANALYSIS]</scope>
</reference>
<reference key="7">
    <citation type="journal article" date="2011" name="Nucleic Acids Res.">
        <title>TEFM (c17orf42) is necessary for transcription of human mtDNA.</title>
        <authorList>
            <person name="Minczuk M."/>
            <person name="He J."/>
            <person name="Duch A.M."/>
            <person name="Ettema T.J."/>
            <person name="Chlebowski A."/>
            <person name="Dzionek K."/>
            <person name="Nijtmans L.G."/>
            <person name="Huynen M.A."/>
            <person name="Holt I.J."/>
        </authorList>
    </citation>
    <scope>FUNCTION</scope>
    <scope>SUBCELLULAR LOCATION</scope>
    <scope>INTERACTION WITH POLRMT</scope>
</reference>
<reference key="8">
    <citation type="journal article" date="2015" name="Proteomics">
        <title>N-terminome analysis of the human mitochondrial proteome.</title>
        <authorList>
            <person name="Vaca Jacome A.S."/>
            <person name="Rabilloud T."/>
            <person name="Schaeffer-Reiss C."/>
            <person name="Rompais M."/>
            <person name="Ayoub D."/>
            <person name="Lane L."/>
            <person name="Bairoch A."/>
            <person name="Van Dorsselaer A."/>
            <person name="Carapito C."/>
        </authorList>
    </citation>
    <scope>IDENTIFICATION BY MASS SPECTROMETRY [LARGE SCALE ANALYSIS]</scope>
</reference>
<reference key="9">
    <citation type="journal article" date="2023" name="Nat. Commun.">
        <title>TEFM variants impair mitochondrial transcription causing childhood-onset neurological disease.</title>
        <authorList>
            <person name="Van Haute L."/>
            <person name="O'Connor E."/>
            <person name="Diaz-Maldonado H."/>
            <person name="Munro B."/>
            <person name="Polavarapu K."/>
            <person name="Hock D.H."/>
            <person name="Arunachal G."/>
            <person name="Athanasiou-Fragkouli A."/>
            <person name="Bardhan M."/>
            <person name="Barth M."/>
            <person name="Bonneau D."/>
            <person name="Brunetti-Pierri N."/>
            <person name="Cappuccio G."/>
            <person name="Caruana N.J."/>
            <person name="Dominik N."/>
            <person name="Goel H."/>
            <person name="Helman G."/>
            <person name="Houlden H."/>
            <person name="Lenaers G."/>
            <person name="Mention K."/>
            <person name="Murphy D."/>
            <person name="Nandeesh B."/>
            <person name="Olimpio C."/>
            <person name="Powell C.A."/>
            <person name="Preethish-Kumar V."/>
            <person name="Procaccio V."/>
            <person name="Rius R."/>
            <person name="Rebelo-Guiomar P."/>
            <person name="Simons C."/>
            <person name="Vengalil S."/>
            <person name="Zaki M.S."/>
            <person name="Ziegler A."/>
            <person name="Thorburn D.R."/>
            <person name="Stroud D.A."/>
            <person name="Maroofian R."/>
            <person name="Christodoulou J."/>
            <person name="Gustafsson C."/>
            <person name="Nalini A."/>
            <person name="Lochmueller H."/>
            <person name="Minczuk M."/>
            <person name="Horvath R."/>
        </authorList>
    </citation>
    <scope>VARIANTS COXPD58 TRP-34; ALA-157; LYS-159; 162-GLU-ARG-163 DEL AND ARG-188</scope>
    <scope>CHARACTERIZATION OF VARIANTS COXPD58 ALA-157; LYS-159; 162-GLU-ARG-163 DEL AND ARG-188</scope>
    <scope>INVOLVEMENT IN COXPD58</scope>
    <scope>FUNCTION</scope>
</reference>
<gene>
    <name type="primary">TEFM</name>
    <name type="synonym">C17orf42</name>
</gene>
<organism>
    <name type="scientific">Homo sapiens</name>
    <name type="common">Human</name>
    <dbReference type="NCBI Taxonomy" id="9606"/>
    <lineage>
        <taxon>Eukaryota</taxon>
        <taxon>Metazoa</taxon>
        <taxon>Chordata</taxon>
        <taxon>Craniata</taxon>
        <taxon>Vertebrata</taxon>
        <taxon>Euteleostomi</taxon>
        <taxon>Mammalia</taxon>
        <taxon>Eutheria</taxon>
        <taxon>Euarchontoglires</taxon>
        <taxon>Primates</taxon>
        <taxon>Haplorrhini</taxon>
        <taxon>Catarrhini</taxon>
        <taxon>Hominidae</taxon>
        <taxon>Homo</taxon>
    </lineage>
</organism>
<keyword id="KW-0002">3D-structure</keyword>
<keyword id="KW-0025">Alternative splicing</keyword>
<keyword id="KW-0225">Disease variant</keyword>
<keyword id="KW-0496">Mitochondrion</keyword>
<keyword id="KW-1135">Mitochondrion nucleoid</keyword>
<keyword id="KW-1274">Primary mitochondrial disease</keyword>
<keyword id="KW-1267">Proteomics identification</keyword>
<keyword id="KW-1185">Reference proteome</keyword>
<keyword id="KW-0804">Transcription</keyword>
<keyword id="KW-0805">Transcription regulation</keyword>
<keyword id="KW-0809">Transit peptide</keyword>
<dbReference type="EMBL" id="AJ314645">
    <property type="protein sequence ID" value="CAC44534.1"/>
    <property type="molecule type" value="mRNA"/>
</dbReference>
<dbReference type="EMBL" id="AK026382">
    <property type="protein sequence ID" value="BAB15468.1"/>
    <property type="status" value="ALT_SEQ"/>
    <property type="molecule type" value="mRNA"/>
</dbReference>
<dbReference type="EMBL" id="CH471147">
    <property type="protein sequence ID" value="EAW80290.1"/>
    <property type="molecule type" value="Genomic_DNA"/>
</dbReference>
<dbReference type="EMBL" id="CH471147">
    <property type="protein sequence ID" value="EAW80292.1"/>
    <property type="molecule type" value="Genomic_DNA"/>
</dbReference>
<dbReference type="EMBL" id="BC009025">
    <property type="protein sequence ID" value="AAH09025.2"/>
    <property type="molecule type" value="mRNA"/>
</dbReference>
<dbReference type="EMBL" id="BC073169">
    <property type="protein sequence ID" value="AAH73169.1"/>
    <property type="status" value="ALT_SEQ"/>
    <property type="molecule type" value="mRNA"/>
</dbReference>
<dbReference type="EMBL" id="CR457360">
    <property type="protein sequence ID" value="CAG33641.1"/>
    <property type="molecule type" value="mRNA"/>
</dbReference>
<dbReference type="CCDS" id="CCDS42291.1">
    <molecule id="Q96QE5-1"/>
</dbReference>
<dbReference type="RefSeq" id="NP_078959.3">
    <molecule id="Q96QE5-1"/>
    <property type="nucleotide sequence ID" value="NM_024683.4"/>
</dbReference>
<dbReference type="RefSeq" id="XP_054173206.1">
    <molecule id="Q96QE5-1"/>
    <property type="nucleotide sequence ID" value="XM_054317231.1"/>
</dbReference>
<dbReference type="PDB" id="5OL8">
    <property type="method" value="X-ray"/>
    <property type="resolution" value="1.90 A"/>
    <property type="chains" value="A/B/C/D=51-360"/>
</dbReference>
<dbReference type="PDB" id="5OL9">
    <property type="method" value="X-ray"/>
    <property type="resolution" value="1.30 A"/>
    <property type="chains" value="A=36-134"/>
</dbReference>
<dbReference type="PDB" id="5OLA">
    <property type="method" value="X-ray"/>
    <property type="resolution" value="3.90 A"/>
    <property type="chains" value="A/B/C/D=136-360"/>
</dbReference>
<dbReference type="PDB" id="8U8U">
    <property type="method" value="EM"/>
    <property type="resolution" value="2.90 A"/>
    <property type="chains" value="A/B=146-360"/>
</dbReference>
<dbReference type="PDB" id="8U8V">
    <property type="method" value="EM"/>
    <property type="resolution" value="2.74 A"/>
    <property type="chains" value="A/B=146-360"/>
</dbReference>
<dbReference type="PDB" id="9BDC">
    <property type="method" value="EM"/>
    <property type="resolution" value="2.54 A"/>
    <property type="chains" value="A/B=146-360"/>
</dbReference>
<dbReference type="PDB" id="9BDD">
    <property type="method" value="EM"/>
    <property type="resolution" value="2.86 A"/>
    <property type="chains" value="A/B=146-360"/>
</dbReference>
<dbReference type="PDBsum" id="5OL8"/>
<dbReference type="PDBsum" id="5OL9"/>
<dbReference type="PDBsum" id="5OLA"/>
<dbReference type="PDBsum" id="8U8U"/>
<dbReference type="PDBsum" id="8U8V"/>
<dbReference type="PDBsum" id="9BDC"/>
<dbReference type="PDBsum" id="9BDD"/>
<dbReference type="EMDB" id="EMD-42027"/>
<dbReference type="EMDB" id="EMD-42028"/>
<dbReference type="EMDB" id="EMD-44448"/>
<dbReference type="EMDB" id="EMD-44449"/>
<dbReference type="SMR" id="Q96QE5"/>
<dbReference type="BioGRID" id="122850">
    <property type="interactions" value="231"/>
</dbReference>
<dbReference type="FunCoup" id="Q96QE5">
    <property type="interactions" value="698"/>
</dbReference>
<dbReference type="IntAct" id="Q96QE5">
    <property type="interactions" value="93"/>
</dbReference>
<dbReference type="MINT" id="Q96QE5"/>
<dbReference type="STRING" id="9606.ENSP00000462963"/>
<dbReference type="GlyGen" id="Q96QE5">
    <property type="glycosylation" value="1 site, 1 O-linked glycan (1 site)"/>
</dbReference>
<dbReference type="iPTMnet" id="Q96QE5"/>
<dbReference type="PhosphoSitePlus" id="Q96QE5"/>
<dbReference type="BioMuta" id="TEFM"/>
<dbReference type="DMDM" id="74761050"/>
<dbReference type="jPOST" id="Q96QE5"/>
<dbReference type="MassIVE" id="Q96QE5"/>
<dbReference type="PaxDb" id="9606-ENSP00000462963"/>
<dbReference type="PeptideAtlas" id="Q96QE5"/>
<dbReference type="ProteomicsDB" id="77865">
    <molecule id="Q96QE5-1"/>
</dbReference>
<dbReference type="ProteomicsDB" id="77866">
    <molecule id="Q96QE5-4"/>
</dbReference>
<dbReference type="Pumba" id="Q96QE5"/>
<dbReference type="Antibodypedia" id="7311">
    <property type="antibodies" value="98 antibodies from 19 providers"/>
</dbReference>
<dbReference type="DNASU" id="79736"/>
<dbReference type="Ensembl" id="ENST00000306049.9">
    <molecule id="Q96QE5-4"/>
    <property type="protein sequence ID" value="ENSP00000306574.5"/>
    <property type="gene ID" value="ENSG00000172171.11"/>
</dbReference>
<dbReference type="Ensembl" id="ENST00000581216.6">
    <molecule id="Q96QE5-1"/>
    <property type="protein sequence ID" value="ENSP00000462963.1"/>
    <property type="gene ID" value="ENSG00000172171.11"/>
</dbReference>
<dbReference type="GeneID" id="79736"/>
<dbReference type="KEGG" id="hsa:79736"/>
<dbReference type="MANE-Select" id="ENST00000581216.6">
    <property type="protein sequence ID" value="ENSP00000462963.1"/>
    <property type="RefSeq nucleotide sequence ID" value="NM_024683.4"/>
    <property type="RefSeq protein sequence ID" value="NP_078959.3"/>
</dbReference>
<dbReference type="UCSC" id="uc002hfu.3">
    <molecule id="Q96QE5-1"/>
    <property type="organism name" value="human"/>
</dbReference>
<dbReference type="AGR" id="HGNC:26223"/>
<dbReference type="CTD" id="79736"/>
<dbReference type="DisGeNET" id="79736"/>
<dbReference type="GeneCards" id="TEFM"/>
<dbReference type="HGNC" id="HGNC:26223">
    <property type="gene designation" value="TEFM"/>
</dbReference>
<dbReference type="HPA" id="ENSG00000172171">
    <property type="expression patterns" value="Low tissue specificity"/>
</dbReference>
<dbReference type="MalaCards" id="TEFM"/>
<dbReference type="MIM" id="616422">
    <property type="type" value="gene"/>
</dbReference>
<dbReference type="MIM" id="620451">
    <property type="type" value="phenotype"/>
</dbReference>
<dbReference type="neXtProt" id="NX_Q96QE5"/>
<dbReference type="OpenTargets" id="ENSG00000172171"/>
<dbReference type="PharmGKB" id="PA142672226"/>
<dbReference type="VEuPathDB" id="HostDB:ENSG00000172171"/>
<dbReference type="eggNOG" id="ENOG502QPVB">
    <property type="taxonomic scope" value="Eukaryota"/>
</dbReference>
<dbReference type="GeneTree" id="ENSGT00390000010581"/>
<dbReference type="HOGENOM" id="CLU_066790_0_0_1"/>
<dbReference type="InParanoid" id="Q96QE5"/>
<dbReference type="OMA" id="ESPQMAQ"/>
<dbReference type="OrthoDB" id="5949570at2759"/>
<dbReference type="PAN-GO" id="Q96QE5">
    <property type="GO annotations" value="3 GO annotations based on evolutionary models"/>
</dbReference>
<dbReference type="PhylomeDB" id="Q96QE5"/>
<dbReference type="TreeFam" id="TF325413"/>
<dbReference type="PathwayCommons" id="Q96QE5"/>
<dbReference type="SignaLink" id="Q96QE5"/>
<dbReference type="BioGRID-ORCS" id="79736">
    <property type="hits" value="299 hits in 1167 CRISPR screens"/>
</dbReference>
<dbReference type="ChiTaRS" id="TEFM">
    <property type="organism name" value="human"/>
</dbReference>
<dbReference type="GenomeRNAi" id="79736"/>
<dbReference type="Pharos" id="Q96QE5">
    <property type="development level" value="Tbio"/>
</dbReference>
<dbReference type="PRO" id="PR:Q96QE5"/>
<dbReference type="Proteomes" id="UP000005640">
    <property type="component" value="Chromosome 17"/>
</dbReference>
<dbReference type="RNAct" id="Q96QE5">
    <property type="molecule type" value="protein"/>
</dbReference>
<dbReference type="Bgee" id="ENSG00000172171">
    <property type="expression patterns" value="Expressed in tendon of biceps brachii and 192 other cell types or tissues"/>
</dbReference>
<dbReference type="ExpressionAtlas" id="Q96QE5">
    <property type="expression patterns" value="baseline and differential"/>
</dbReference>
<dbReference type="GO" id="GO:0005759">
    <property type="term" value="C:mitochondrial matrix"/>
    <property type="evidence" value="ECO:0000314"/>
    <property type="project" value="UniProtKB"/>
</dbReference>
<dbReference type="GO" id="GO:0042645">
    <property type="term" value="C:mitochondrial nucleoid"/>
    <property type="evidence" value="ECO:0000314"/>
    <property type="project" value="UniProtKB"/>
</dbReference>
<dbReference type="GO" id="GO:0005739">
    <property type="term" value="C:mitochondrion"/>
    <property type="evidence" value="ECO:0000314"/>
    <property type="project" value="HPA"/>
</dbReference>
<dbReference type="GO" id="GO:1990904">
    <property type="term" value="C:ribonucleoprotein complex"/>
    <property type="evidence" value="ECO:0000314"/>
    <property type="project" value="UniProtKB"/>
</dbReference>
<dbReference type="GO" id="GO:0030337">
    <property type="term" value="F:DNA polymerase processivity factor activity"/>
    <property type="evidence" value="ECO:0000318"/>
    <property type="project" value="GO_Central"/>
</dbReference>
<dbReference type="GO" id="GO:0003723">
    <property type="term" value="F:RNA binding"/>
    <property type="evidence" value="ECO:0007005"/>
    <property type="project" value="UniProtKB"/>
</dbReference>
<dbReference type="GO" id="GO:0003711">
    <property type="term" value="F:transcription elongation factor activity"/>
    <property type="evidence" value="ECO:0000314"/>
    <property type="project" value="UniProtKB"/>
</dbReference>
<dbReference type="GO" id="GO:0006390">
    <property type="term" value="P:mitochondrial transcription"/>
    <property type="evidence" value="ECO:0000318"/>
    <property type="project" value="GO_Central"/>
</dbReference>
<dbReference type="GO" id="GO:1903109">
    <property type="term" value="P:positive regulation of mitochondrial transcription"/>
    <property type="evidence" value="ECO:0000315"/>
    <property type="project" value="UniProtKB"/>
</dbReference>
<dbReference type="GO" id="GO:0002082">
    <property type="term" value="P:regulation of oxidative phosphorylation"/>
    <property type="evidence" value="ECO:0000315"/>
    <property type="project" value="UniProtKB"/>
</dbReference>
<dbReference type="GO" id="GO:0006392">
    <property type="term" value="P:transcription elongation by mitochondrial RNA polymerase"/>
    <property type="evidence" value="ECO:0007669"/>
    <property type="project" value="InterPro"/>
</dbReference>
<dbReference type="FunFam" id="3.30.420.10:FF:000095">
    <property type="entry name" value="Transcription elongation factor, mitochondrial"/>
    <property type="match status" value="1"/>
</dbReference>
<dbReference type="Gene3D" id="3.30.420.10">
    <property type="entry name" value="Ribonuclease H-like superfamily/Ribonuclease H"/>
    <property type="match status" value="1"/>
</dbReference>
<dbReference type="InterPro" id="IPR012337">
    <property type="entry name" value="RNaseH-like_sf"/>
</dbReference>
<dbReference type="InterPro" id="IPR036397">
    <property type="entry name" value="RNaseH_sf"/>
</dbReference>
<dbReference type="InterPro" id="IPR010994">
    <property type="entry name" value="RuvA_2-like"/>
</dbReference>
<dbReference type="InterPro" id="IPR039150">
    <property type="entry name" value="TEFM"/>
</dbReference>
<dbReference type="PANTHER" id="PTHR21053">
    <property type="entry name" value="TRANSCRIPTION ELONGATION FACTOR, MITOCHONDRIAL"/>
    <property type="match status" value="1"/>
</dbReference>
<dbReference type="PANTHER" id="PTHR21053:SF2">
    <property type="entry name" value="TRANSCRIPTION ELONGATION FACTOR, MITOCHONDRIAL"/>
    <property type="match status" value="1"/>
</dbReference>
<dbReference type="Pfam" id="PF12836">
    <property type="entry name" value="HHH_3"/>
    <property type="match status" value="1"/>
</dbReference>
<dbReference type="SUPFAM" id="SSF53098">
    <property type="entry name" value="Ribonuclease H-like"/>
    <property type="match status" value="1"/>
</dbReference>
<dbReference type="SUPFAM" id="SSF47781">
    <property type="entry name" value="RuvA domain 2-like"/>
    <property type="match status" value="1"/>
</dbReference>
<sequence length="360" mass="41676">MSGSVLFTAGERWRCFLTPSRSSLYWALHNFCCRKKSTTPKKITPNVTFCDENAKEPENALDKLFSSEQQASILHVLNTASTKELEAFRLLRGRRSINIVEHRENFGPFQNLESLMNVPLFKYKSTVQVCNSILCPKTGREKRKSPENRFLRKLLKPDIERERLKAVNSIISIVFGTRRIAWAHLDRKLTVLDWQQSDRWSLMRGIYSSSVYLEEISSIISKMPKADFYVLEKTGLSIQNSSLFPILLHFHIMEAMLYALLNKTFAQDGQHQVLSMNRNAVGKHFELMIGDSRTSGKELVKQFLFDSILKADPRVFFPSDKIVHYRQMFLSTELQRVEELYDSLLQAIAFYELAVFDSQP</sequence>
<proteinExistence type="evidence at protein level"/>
<comment type="function">
    <text evidence="2 3">Transcription elongation factor which increases mitochondrial RNA polymerase processivity (PubMed:21278163, PubMed:36823193). Regulates transcription of the mitochondrial genome, including genes important for the oxidative phosphorylation machinery (PubMed:21278163, PubMed:36823193).</text>
</comment>
<comment type="subunit">
    <text evidence="2">Interacts with POLRMT.</text>
</comment>
<comment type="interaction">
    <interactant intactId="EBI-725550">
        <id>Q96QE5</id>
    </interactant>
    <interactant intactId="EBI-355145">
        <id>O00411</id>
        <label>POLRMT</label>
    </interactant>
    <organismsDiffer>false</organismsDiffer>
    <experiments>6</experiments>
</comment>
<comment type="subcellular location">
    <subcellularLocation>
        <location evidence="2">Mitochondrion matrix</location>
    </subcellularLocation>
    <subcellularLocation>
        <location evidence="2">Mitochondrion matrix</location>
        <location evidence="2">Mitochondrion nucleoid</location>
    </subcellularLocation>
</comment>
<comment type="alternative products">
    <event type="alternative splicing"/>
    <isoform>
        <id>Q96QE5-1</id>
        <name>1</name>
        <sequence type="displayed"/>
    </isoform>
    <isoform>
        <id>Q96QE5-4</id>
        <name>2</name>
        <sequence type="described" ref="VSP_040808 VSP_040809"/>
    </isoform>
</comment>
<comment type="disease" evidence="3">
    <disease id="DI-06725">
        <name>Combined oxidative phosphorylation deficiency 58</name>
        <acronym>COXPD58</acronym>
        <description>An autosomal recessive mitochondrial disease manifesting in the first 5 years of life and characterized by a wide range of clinical presentations. Clinical features include neonatal lactic acidosis, epileptic encephalopathy, developmental delay and impaired intellectual development with non-specific brain abnormalities, or mitochondrial myopathy with a treatable neuromuscular transmission defect.</description>
        <dbReference type="MIM" id="620451"/>
    </disease>
    <text>The disease is caused by variants affecting the gene represented in this entry.</text>
</comment>
<comment type="similarity">
    <text evidence="6">Belongs to the TEFM family.</text>
</comment>
<comment type="sequence caution" evidence="6">
    <conflict type="erroneous translation">
        <sequence resource="EMBL-CDS" id="AAH73169"/>
    </conflict>
    <text>Wrong choice of CDS.</text>
</comment>
<comment type="sequence caution" evidence="6">
    <conflict type="erroneous translation">
        <sequence resource="EMBL-CDS" id="BAB15468"/>
    </conflict>
    <text>Wrong choice of CDS.</text>
</comment>
<protein>
    <recommendedName>
        <fullName>Transcription elongation factor, mitochondrial</fullName>
    </recommendedName>
</protein>
<name>TEFM_HUMAN</name>
<accession>Q96QE5</accession>
<accession>E1P655</accession>
<accession>Q6GPG5</accession>
<accession>Q6PJ19</accession>
<accession>Q96H04</accession>
<accession>Q9H5Z9</accession>